<organism>
    <name type="scientific">Pseudomonas savastanoi pv. phaseolicola (strain 1448A / Race 6)</name>
    <name type="common">Pseudomonas syringae pv. phaseolicola (strain 1448A / Race 6)</name>
    <dbReference type="NCBI Taxonomy" id="264730"/>
    <lineage>
        <taxon>Bacteria</taxon>
        <taxon>Pseudomonadati</taxon>
        <taxon>Pseudomonadota</taxon>
        <taxon>Gammaproteobacteria</taxon>
        <taxon>Pseudomonadales</taxon>
        <taxon>Pseudomonadaceae</taxon>
        <taxon>Pseudomonas</taxon>
    </lineage>
</organism>
<reference key="1">
    <citation type="journal article" date="2005" name="J. Bacteriol.">
        <title>Whole-genome sequence analysis of Pseudomonas syringae pv. phaseolicola 1448A reveals divergence among pathovars in genes involved in virulence and transposition.</title>
        <authorList>
            <person name="Joardar V."/>
            <person name="Lindeberg M."/>
            <person name="Jackson R.W."/>
            <person name="Selengut J."/>
            <person name="Dodson R."/>
            <person name="Brinkac L.M."/>
            <person name="Daugherty S.C."/>
            <person name="DeBoy R.T."/>
            <person name="Durkin A.S."/>
            <person name="Gwinn Giglio M."/>
            <person name="Madupu R."/>
            <person name="Nelson W.C."/>
            <person name="Rosovitz M.J."/>
            <person name="Sullivan S.A."/>
            <person name="Crabtree J."/>
            <person name="Creasy T."/>
            <person name="Davidsen T.M."/>
            <person name="Haft D.H."/>
            <person name="Zafar N."/>
            <person name="Zhou L."/>
            <person name="Halpin R."/>
            <person name="Holley T."/>
            <person name="Khouri H.M."/>
            <person name="Feldblyum T.V."/>
            <person name="White O."/>
            <person name="Fraser C.M."/>
            <person name="Chatterjee A.K."/>
            <person name="Cartinhour S."/>
            <person name="Schneider D."/>
            <person name="Mansfield J.W."/>
            <person name="Collmer A."/>
            <person name="Buell R."/>
        </authorList>
    </citation>
    <scope>NUCLEOTIDE SEQUENCE [LARGE SCALE GENOMIC DNA]</scope>
    <source>
        <strain>1448A / Race 6</strain>
    </source>
</reference>
<name>GLGA_PSE14</name>
<evidence type="ECO:0000255" key="1">
    <source>
        <dbReference type="HAMAP-Rule" id="MF_00484"/>
    </source>
</evidence>
<comment type="function">
    <text evidence="1">Synthesizes alpha-1,4-glucan chains using ADP-glucose.</text>
</comment>
<comment type="catalytic activity">
    <reaction evidence="1">
        <text>[(1-&gt;4)-alpha-D-glucosyl](n) + ADP-alpha-D-glucose = [(1-&gt;4)-alpha-D-glucosyl](n+1) + ADP + H(+)</text>
        <dbReference type="Rhea" id="RHEA:18189"/>
        <dbReference type="Rhea" id="RHEA-COMP:9584"/>
        <dbReference type="Rhea" id="RHEA-COMP:9587"/>
        <dbReference type="ChEBI" id="CHEBI:15378"/>
        <dbReference type="ChEBI" id="CHEBI:15444"/>
        <dbReference type="ChEBI" id="CHEBI:57498"/>
        <dbReference type="ChEBI" id="CHEBI:456216"/>
        <dbReference type="EC" id="2.4.1.21"/>
    </reaction>
</comment>
<comment type="pathway">
    <text evidence="1">Glycan biosynthesis; glycogen biosynthesis.</text>
</comment>
<comment type="similarity">
    <text evidence="1">Belongs to the glycosyltransferase 1 family. Bacterial/plant glycogen synthase subfamily.</text>
</comment>
<gene>
    <name evidence="1" type="primary">glgA</name>
    <name type="ordered locus">PSPPH_2248</name>
</gene>
<proteinExistence type="inferred from homology"/>
<feature type="chain" id="PRO_0000230258" description="Glycogen synthase">
    <location>
        <begin position="1"/>
        <end position="485"/>
    </location>
</feature>
<feature type="binding site" evidence="1">
    <location>
        <position position="21"/>
    </location>
    <ligand>
        <name>ADP-alpha-D-glucose</name>
        <dbReference type="ChEBI" id="CHEBI:57498"/>
    </ligand>
</feature>
<accession>Q48JG9</accession>
<dbReference type="EC" id="2.4.1.21" evidence="1"/>
<dbReference type="EMBL" id="CP000058">
    <property type="protein sequence ID" value="AAZ35317.1"/>
    <property type="molecule type" value="Genomic_DNA"/>
</dbReference>
<dbReference type="SMR" id="Q48JG9"/>
<dbReference type="CAZy" id="GT5">
    <property type="family name" value="Glycosyltransferase Family 5"/>
</dbReference>
<dbReference type="KEGG" id="psp:PSPPH_2248"/>
<dbReference type="eggNOG" id="COG0297">
    <property type="taxonomic scope" value="Bacteria"/>
</dbReference>
<dbReference type="HOGENOM" id="CLU_009583_18_4_6"/>
<dbReference type="UniPathway" id="UPA00164"/>
<dbReference type="Proteomes" id="UP000000551">
    <property type="component" value="Chromosome"/>
</dbReference>
<dbReference type="GO" id="GO:0009011">
    <property type="term" value="F:alpha-1,4-glucan glucosyltransferase (ADP-glucose donor) activity"/>
    <property type="evidence" value="ECO:0007669"/>
    <property type="project" value="UniProtKB-UniRule"/>
</dbReference>
<dbReference type="GO" id="GO:0004373">
    <property type="term" value="F:alpha-1,4-glucan glucosyltransferase (UDP-glucose donor) activity"/>
    <property type="evidence" value="ECO:0007669"/>
    <property type="project" value="InterPro"/>
</dbReference>
<dbReference type="GO" id="GO:0005978">
    <property type="term" value="P:glycogen biosynthetic process"/>
    <property type="evidence" value="ECO:0007669"/>
    <property type="project" value="UniProtKB-UniRule"/>
</dbReference>
<dbReference type="CDD" id="cd03791">
    <property type="entry name" value="GT5_Glycogen_synthase_DULL1-like"/>
    <property type="match status" value="1"/>
</dbReference>
<dbReference type="Gene3D" id="3.40.50.2000">
    <property type="entry name" value="Glycogen Phosphorylase B"/>
    <property type="match status" value="2"/>
</dbReference>
<dbReference type="HAMAP" id="MF_00484">
    <property type="entry name" value="Glycogen_synth"/>
    <property type="match status" value="1"/>
</dbReference>
<dbReference type="InterPro" id="IPR001296">
    <property type="entry name" value="Glyco_trans_1"/>
</dbReference>
<dbReference type="InterPro" id="IPR011835">
    <property type="entry name" value="GS/SS"/>
</dbReference>
<dbReference type="InterPro" id="IPR013534">
    <property type="entry name" value="Starch_synth_cat_dom"/>
</dbReference>
<dbReference type="NCBIfam" id="TIGR02095">
    <property type="entry name" value="glgA"/>
    <property type="match status" value="1"/>
</dbReference>
<dbReference type="NCBIfam" id="NF001899">
    <property type="entry name" value="PRK00654.1-2"/>
    <property type="match status" value="1"/>
</dbReference>
<dbReference type="NCBIfam" id="NF001901">
    <property type="entry name" value="PRK00654.1-5"/>
    <property type="match status" value="1"/>
</dbReference>
<dbReference type="PANTHER" id="PTHR45825:SF8">
    <property type="entry name" value="GLYCOGEN SYNTHASE"/>
    <property type="match status" value="1"/>
</dbReference>
<dbReference type="PANTHER" id="PTHR45825">
    <property type="entry name" value="GRANULE-BOUND STARCH SYNTHASE 1, CHLOROPLASTIC/AMYLOPLASTIC"/>
    <property type="match status" value="1"/>
</dbReference>
<dbReference type="Pfam" id="PF08323">
    <property type="entry name" value="Glyco_transf_5"/>
    <property type="match status" value="1"/>
</dbReference>
<dbReference type="Pfam" id="PF00534">
    <property type="entry name" value="Glycos_transf_1"/>
    <property type="match status" value="1"/>
</dbReference>
<dbReference type="SUPFAM" id="SSF53756">
    <property type="entry name" value="UDP-Glycosyltransferase/glycogen phosphorylase"/>
    <property type="match status" value="1"/>
</dbReference>
<protein>
    <recommendedName>
        <fullName evidence="1">Glycogen synthase</fullName>
        <ecNumber evidence="1">2.4.1.21</ecNumber>
    </recommendedName>
    <alternativeName>
        <fullName evidence="1">Starch [bacterial glycogen] synthase</fullName>
    </alternativeName>
</protein>
<sequence length="485" mass="53484">MSQVSRRKVLFVTSELADLVKTGGLGDVSAALPRAMRHLHDVRVLIPGYPQVINSGNPIHIISQLGGHAALPPCKVGRMDMKDGLVIYVLICPELYEREGTPYADSDGRDWSDNHIRFARLGLAAAEFAAGEVKSQWCPELVHAHDWPAGLAPAYMRWRGQSTPSIFTIHNLAYQGTVSTASSRELGIPDEAITPEGMEFYGKLSFIKAGMAFASHITTVSATYAREITTPEFGCGLEGFLQSKANKGQLSGIPNGIDESWDAATDEHLICHFAPNEWTRKEINADYVRELFELDASTGPLYAVVSRLVYQKGLDLTIGVAEHIVNNGGQIAIIGRGEPEEEDAMRELAARFPGRIGVRIGFNETDARRMFAGSDFLLMPSRYEPCGLSQMYAQRFGSLPVARNTGGLADTIEDGVTGFLFKESTIESYTEALNRTFQVFAHRELLNAMRCRAMAAPFNWHQAVEPYADLYRDLLKKNVSISSNY</sequence>
<keyword id="KW-0320">Glycogen biosynthesis</keyword>
<keyword id="KW-0328">Glycosyltransferase</keyword>
<keyword id="KW-0808">Transferase</keyword>